<comment type="function">
    <text evidence="1">Catalyzes the ATP-dependent phosphorylation of L-homoserine to L-homoserine phosphate.</text>
</comment>
<comment type="catalytic activity">
    <reaction evidence="1">
        <text>L-homoserine + ATP = O-phospho-L-homoserine + ADP + H(+)</text>
        <dbReference type="Rhea" id="RHEA:13985"/>
        <dbReference type="ChEBI" id="CHEBI:15378"/>
        <dbReference type="ChEBI" id="CHEBI:30616"/>
        <dbReference type="ChEBI" id="CHEBI:57476"/>
        <dbReference type="ChEBI" id="CHEBI:57590"/>
        <dbReference type="ChEBI" id="CHEBI:456216"/>
        <dbReference type="EC" id="2.7.1.39"/>
    </reaction>
</comment>
<comment type="pathway">
    <text evidence="1">Amino-acid biosynthesis; L-threonine biosynthesis; L-threonine from L-aspartate: step 4/5.</text>
</comment>
<comment type="subcellular location">
    <subcellularLocation>
        <location evidence="1">Cytoplasm</location>
    </subcellularLocation>
</comment>
<comment type="similarity">
    <text evidence="1">Belongs to the GHMP kinase family. Homoserine kinase subfamily.</text>
</comment>
<evidence type="ECO:0000255" key="1">
    <source>
        <dbReference type="HAMAP-Rule" id="MF_00384"/>
    </source>
</evidence>
<reference key="1">
    <citation type="journal article" date="2008" name="BMC Genomics">
        <title>The genome sequence of the fish pathogen Aliivibrio salmonicida strain LFI1238 shows extensive evidence of gene decay.</title>
        <authorList>
            <person name="Hjerde E."/>
            <person name="Lorentzen M.S."/>
            <person name="Holden M.T."/>
            <person name="Seeger K."/>
            <person name="Paulsen S."/>
            <person name="Bason N."/>
            <person name="Churcher C."/>
            <person name="Harris D."/>
            <person name="Norbertczak H."/>
            <person name="Quail M.A."/>
            <person name="Sanders S."/>
            <person name="Thurston S."/>
            <person name="Parkhill J."/>
            <person name="Willassen N.P."/>
            <person name="Thomson N.R."/>
        </authorList>
    </citation>
    <scope>NUCLEOTIDE SEQUENCE [LARGE SCALE GENOMIC DNA]</scope>
    <source>
        <strain>LFI1238</strain>
    </source>
</reference>
<protein>
    <recommendedName>
        <fullName evidence="1">Homoserine kinase</fullName>
        <shortName evidence="1">HK</shortName>
        <shortName evidence="1">HSK</shortName>
        <ecNumber evidence="1">2.7.1.39</ecNumber>
    </recommendedName>
</protein>
<proteinExistence type="inferred from homology"/>
<gene>
    <name evidence="1" type="primary">thrB</name>
    <name type="ordered locus">VSAL_I2555</name>
</gene>
<sequence>MSVVVYAPASIGNVSVGFDVLGAAVSPIDGSLLGDRVLVESGSDAFTLATSGRFVDKLPENPQDNIVYDCWKVFARELETKNVTLKPIHMVLEKNMPIGSGLGSSACSIVAALDALNQFHDKPLTEMELLALMGEMEGQISGGIHYDNVAPCYLGGLQLMVEELGIISQEVPCFDEWYWVMAYPGIKVSTAEAREILPSQYRRQDVIAHGRNLAGFIHACYSKQPELAAKMIKDVVAEPYRERLLPNFAQARAYAASAGALTTGISGSGPTLFSICKDKDIAERVSRWLQDNYVQNDEGFVHVCRLDKQGSQVTGSKL</sequence>
<keyword id="KW-0028">Amino-acid biosynthesis</keyword>
<keyword id="KW-0067">ATP-binding</keyword>
<keyword id="KW-0963">Cytoplasm</keyword>
<keyword id="KW-0418">Kinase</keyword>
<keyword id="KW-0547">Nucleotide-binding</keyword>
<keyword id="KW-0791">Threonine biosynthesis</keyword>
<keyword id="KW-0808">Transferase</keyword>
<organism>
    <name type="scientific">Aliivibrio salmonicida (strain LFI1238)</name>
    <name type="common">Vibrio salmonicida (strain LFI1238)</name>
    <dbReference type="NCBI Taxonomy" id="316275"/>
    <lineage>
        <taxon>Bacteria</taxon>
        <taxon>Pseudomonadati</taxon>
        <taxon>Pseudomonadota</taxon>
        <taxon>Gammaproteobacteria</taxon>
        <taxon>Vibrionales</taxon>
        <taxon>Vibrionaceae</taxon>
        <taxon>Aliivibrio</taxon>
    </lineage>
</organism>
<name>KHSE_ALISL</name>
<dbReference type="EC" id="2.7.1.39" evidence="1"/>
<dbReference type="EMBL" id="FM178379">
    <property type="protein sequence ID" value="CAQ80239.1"/>
    <property type="molecule type" value="Genomic_DNA"/>
</dbReference>
<dbReference type="RefSeq" id="WP_012551026.1">
    <property type="nucleotide sequence ID" value="NC_011312.1"/>
</dbReference>
<dbReference type="SMR" id="B6EKY7"/>
<dbReference type="KEGG" id="vsa:VSAL_I2555"/>
<dbReference type="eggNOG" id="COG0083">
    <property type="taxonomic scope" value="Bacteria"/>
</dbReference>
<dbReference type="HOGENOM" id="CLU_041243_1_1_6"/>
<dbReference type="UniPathway" id="UPA00050">
    <property type="reaction ID" value="UER00064"/>
</dbReference>
<dbReference type="Proteomes" id="UP000001730">
    <property type="component" value="Chromosome 1"/>
</dbReference>
<dbReference type="GO" id="GO:0005737">
    <property type="term" value="C:cytoplasm"/>
    <property type="evidence" value="ECO:0007669"/>
    <property type="project" value="UniProtKB-SubCell"/>
</dbReference>
<dbReference type="GO" id="GO:0005524">
    <property type="term" value="F:ATP binding"/>
    <property type="evidence" value="ECO:0007669"/>
    <property type="project" value="UniProtKB-UniRule"/>
</dbReference>
<dbReference type="GO" id="GO:0004413">
    <property type="term" value="F:homoserine kinase activity"/>
    <property type="evidence" value="ECO:0007669"/>
    <property type="project" value="UniProtKB-UniRule"/>
</dbReference>
<dbReference type="GO" id="GO:0009088">
    <property type="term" value="P:threonine biosynthetic process"/>
    <property type="evidence" value="ECO:0007669"/>
    <property type="project" value="UniProtKB-UniRule"/>
</dbReference>
<dbReference type="Gene3D" id="3.30.230.10">
    <property type="match status" value="1"/>
</dbReference>
<dbReference type="Gene3D" id="3.30.70.890">
    <property type="entry name" value="GHMP kinase, C-terminal domain"/>
    <property type="match status" value="1"/>
</dbReference>
<dbReference type="HAMAP" id="MF_00384">
    <property type="entry name" value="Homoser_kinase"/>
    <property type="match status" value="1"/>
</dbReference>
<dbReference type="InterPro" id="IPR013750">
    <property type="entry name" value="GHMP_kinase_C_dom"/>
</dbReference>
<dbReference type="InterPro" id="IPR036554">
    <property type="entry name" value="GHMP_kinase_C_sf"/>
</dbReference>
<dbReference type="InterPro" id="IPR006204">
    <property type="entry name" value="GHMP_kinase_N_dom"/>
</dbReference>
<dbReference type="InterPro" id="IPR006203">
    <property type="entry name" value="GHMP_knse_ATP-bd_CS"/>
</dbReference>
<dbReference type="InterPro" id="IPR000870">
    <property type="entry name" value="Homoserine_kinase"/>
</dbReference>
<dbReference type="InterPro" id="IPR020568">
    <property type="entry name" value="Ribosomal_Su5_D2-typ_SF"/>
</dbReference>
<dbReference type="InterPro" id="IPR014721">
    <property type="entry name" value="Ribsml_uS5_D2-typ_fold_subgr"/>
</dbReference>
<dbReference type="NCBIfam" id="NF002288">
    <property type="entry name" value="PRK01212.1-4"/>
    <property type="match status" value="1"/>
</dbReference>
<dbReference type="NCBIfam" id="TIGR00191">
    <property type="entry name" value="thrB"/>
    <property type="match status" value="1"/>
</dbReference>
<dbReference type="PANTHER" id="PTHR20861:SF1">
    <property type="entry name" value="HOMOSERINE KINASE"/>
    <property type="match status" value="1"/>
</dbReference>
<dbReference type="PANTHER" id="PTHR20861">
    <property type="entry name" value="HOMOSERINE/4-DIPHOSPHOCYTIDYL-2-C-METHYL-D-ERYTHRITOL KINASE"/>
    <property type="match status" value="1"/>
</dbReference>
<dbReference type="Pfam" id="PF08544">
    <property type="entry name" value="GHMP_kinases_C"/>
    <property type="match status" value="1"/>
</dbReference>
<dbReference type="Pfam" id="PF00288">
    <property type="entry name" value="GHMP_kinases_N"/>
    <property type="match status" value="1"/>
</dbReference>
<dbReference type="PIRSF" id="PIRSF000676">
    <property type="entry name" value="Homoser_kin"/>
    <property type="match status" value="1"/>
</dbReference>
<dbReference type="PRINTS" id="PR00958">
    <property type="entry name" value="HOMSERKINASE"/>
</dbReference>
<dbReference type="SUPFAM" id="SSF55060">
    <property type="entry name" value="GHMP Kinase, C-terminal domain"/>
    <property type="match status" value="1"/>
</dbReference>
<dbReference type="SUPFAM" id="SSF54211">
    <property type="entry name" value="Ribosomal protein S5 domain 2-like"/>
    <property type="match status" value="1"/>
</dbReference>
<dbReference type="PROSITE" id="PS00627">
    <property type="entry name" value="GHMP_KINASES_ATP"/>
    <property type="match status" value="1"/>
</dbReference>
<feature type="chain" id="PRO_1000122402" description="Homoserine kinase">
    <location>
        <begin position="1"/>
        <end position="318"/>
    </location>
</feature>
<feature type="binding site" evidence="1">
    <location>
        <begin position="97"/>
        <end position="107"/>
    </location>
    <ligand>
        <name>ATP</name>
        <dbReference type="ChEBI" id="CHEBI:30616"/>
    </ligand>
</feature>
<accession>B6EKY7</accession>